<keyword id="KW-0052">Apoplast</keyword>
<keyword id="KW-0186">Copper</keyword>
<keyword id="KW-0325">Glycoprotein</keyword>
<keyword id="KW-0439">Lignin degradation</keyword>
<keyword id="KW-0479">Metal-binding</keyword>
<keyword id="KW-0560">Oxidoreductase</keyword>
<keyword id="KW-1185">Reference proteome</keyword>
<keyword id="KW-0677">Repeat</keyword>
<keyword id="KW-0964">Secreted</keyword>
<keyword id="KW-0732">Signal</keyword>
<dbReference type="EC" id="1.10.3.2"/>
<dbReference type="EMBL" id="AC079634">
    <property type="protein sequence ID" value="AAK92654.1"/>
    <property type="status" value="ALT_SEQ"/>
    <property type="molecule type" value="Genomic_DNA"/>
</dbReference>
<dbReference type="EMBL" id="DP000086">
    <property type="protein sequence ID" value="ABB47271.1"/>
    <property type="molecule type" value="Genomic_DNA"/>
</dbReference>
<dbReference type="EMBL" id="AP008216">
    <property type="protein sequence ID" value="BAF26313.1"/>
    <property type="molecule type" value="Genomic_DNA"/>
</dbReference>
<dbReference type="EMBL" id="AP014966">
    <property type="protein sequence ID" value="BAT10439.1"/>
    <property type="molecule type" value="Genomic_DNA"/>
</dbReference>
<dbReference type="EMBL" id="AK110474">
    <property type="status" value="NOT_ANNOTATED_CDS"/>
    <property type="molecule type" value="mRNA"/>
</dbReference>
<dbReference type="RefSeq" id="XP_015613446.1">
    <property type="nucleotide sequence ID" value="XM_015757960.1"/>
</dbReference>
<dbReference type="SMR" id="Q339K6"/>
<dbReference type="STRING" id="39947.Q339K6"/>
<dbReference type="GlyCosmos" id="Q339K6">
    <property type="glycosylation" value="9 sites, No reported glycans"/>
</dbReference>
<dbReference type="PaxDb" id="39947-Q339K6"/>
<dbReference type="EnsemblPlants" id="Os10t0346300-01">
    <property type="protein sequence ID" value="Os10t0346300-01"/>
    <property type="gene ID" value="Os10g0346300"/>
</dbReference>
<dbReference type="Gramene" id="Os10t0346300-01">
    <property type="protein sequence ID" value="Os10t0346300-01"/>
    <property type="gene ID" value="Os10g0346300"/>
</dbReference>
<dbReference type="KEGG" id="dosa:Os10g0346300"/>
<dbReference type="eggNOG" id="KOG1263">
    <property type="taxonomic scope" value="Eukaryota"/>
</dbReference>
<dbReference type="HOGENOM" id="CLU_006504_6_3_1"/>
<dbReference type="InParanoid" id="Q339K6"/>
<dbReference type="OMA" id="PDNRACW"/>
<dbReference type="OrthoDB" id="590181at2759"/>
<dbReference type="Proteomes" id="UP000000763">
    <property type="component" value="Chromosome 10"/>
</dbReference>
<dbReference type="Proteomes" id="UP000059680">
    <property type="component" value="Chromosome 10"/>
</dbReference>
<dbReference type="GO" id="GO:0048046">
    <property type="term" value="C:apoplast"/>
    <property type="evidence" value="ECO:0007669"/>
    <property type="project" value="UniProtKB-SubCell"/>
</dbReference>
<dbReference type="GO" id="GO:0005507">
    <property type="term" value="F:copper ion binding"/>
    <property type="evidence" value="ECO:0007669"/>
    <property type="project" value="InterPro"/>
</dbReference>
<dbReference type="GO" id="GO:0052716">
    <property type="term" value="F:hydroquinone:oxygen oxidoreductase activity"/>
    <property type="evidence" value="ECO:0007669"/>
    <property type="project" value="UniProtKB-EC"/>
</dbReference>
<dbReference type="GO" id="GO:0016491">
    <property type="term" value="F:oxidoreductase activity"/>
    <property type="evidence" value="ECO:0000318"/>
    <property type="project" value="GO_Central"/>
</dbReference>
<dbReference type="GO" id="GO:0046274">
    <property type="term" value="P:lignin catabolic process"/>
    <property type="evidence" value="ECO:0007669"/>
    <property type="project" value="UniProtKB-KW"/>
</dbReference>
<dbReference type="CDD" id="cd13849">
    <property type="entry name" value="CuRO_1_LCC_plant"/>
    <property type="match status" value="1"/>
</dbReference>
<dbReference type="CDD" id="cd13875">
    <property type="entry name" value="CuRO_2_LCC_plant"/>
    <property type="match status" value="1"/>
</dbReference>
<dbReference type="CDD" id="cd13897">
    <property type="entry name" value="CuRO_3_LCC_plant"/>
    <property type="match status" value="1"/>
</dbReference>
<dbReference type="Gene3D" id="2.60.40.420">
    <property type="entry name" value="Cupredoxins - blue copper proteins"/>
    <property type="match status" value="3"/>
</dbReference>
<dbReference type="InterPro" id="IPR011707">
    <property type="entry name" value="Cu-oxidase-like_N"/>
</dbReference>
<dbReference type="InterPro" id="IPR001117">
    <property type="entry name" value="Cu-oxidase_2nd"/>
</dbReference>
<dbReference type="InterPro" id="IPR011706">
    <property type="entry name" value="Cu-oxidase_C"/>
</dbReference>
<dbReference type="InterPro" id="IPR045087">
    <property type="entry name" value="Cu-oxidase_fam"/>
</dbReference>
<dbReference type="InterPro" id="IPR033138">
    <property type="entry name" value="Cu_oxidase_CS"/>
</dbReference>
<dbReference type="InterPro" id="IPR002355">
    <property type="entry name" value="Cu_oxidase_Cu_BS"/>
</dbReference>
<dbReference type="InterPro" id="IPR008972">
    <property type="entry name" value="Cupredoxin"/>
</dbReference>
<dbReference type="InterPro" id="IPR034288">
    <property type="entry name" value="CuRO_1_LCC"/>
</dbReference>
<dbReference type="InterPro" id="IPR034285">
    <property type="entry name" value="CuRO_2_LCC"/>
</dbReference>
<dbReference type="InterPro" id="IPR034289">
    <property type="entry name" value="CuRO_3_LCC"/>
</dbReference>
<dbReference type="PANTHER" id="PTHR11709:SF343">
    <property type="entry name" value="LACCASE-15"/>
    <property type="match status" value="1"/>
</dbReference>
<dbReference type="PANTHER" id="PTHR11709">
    <property type="entry name" value="MULTI-COPPER OXIDASE"/>
    <property type="match status" value="1"/>
</dbReference>
<dbReference type="Pfam" id="PF00394">
    <property type="entry name" value="Cu-oxidase"/>
    <property type="match status" value="1"/>
</dbReference>
<dbReference type="Pfam" id="PF07731">
    <property type="entry name" value="Cu-oxidase_2"/>
    <property type="match status" value="1"/>
</dbReference>
<dbReference type="Pfam" id="PF07732">
    <property type="entry name" value="Cu-oxidase_3"/>
    <property type="match status" value="1"/>
</dbReference>
<dbReference type="SUPFAM" id="SSF49503">
    <property type="entry name" value="Cupredoxins"/>
    <property type="match status" value="3"/>
</dbReference>
<dbReference type="PROSITE" id="PS00079">
    <property type="entry name" value="MULTICOPPER_OXIDASE1"/>
    <property type="match status" value="1"/>
</dbReference>
<dbReference type="PROSITE" id="PS00080">
    <property type="entry name" value="MULTICOPPER_OXIDASE2"/>
    <property type="match status" value="1"/>
</dbReference>
<name>LAC15_ORYSJ</name>
<gene>
    <name type="primary">LAC15</name>
    <name type="ordered locus">Os10g0346300</name>
    <name type="ordered locus">LOC_Os10g20610</name>
    <name type="ORF">OSJNBa0045C13.15</name>
</gene>
<feature type="signal peptide" evidence="2">
    <location>
        <begin position="1"/>
        <end position="29"/>
    </location>
</feature>
<feature type="chain" id="PRO_0000291899" description="Laccase-15">
    <location>
        <begin position="30"/>
        <end position="599"/>
    </location>
</feature>
<feature type="domain" description="Plastocyanin-like 1">
    <location>
        <begin position="46"/>
        <end position="162"/>
    </location>
</feature>
<feature type="domain" description="Plastocyanin-like 2">
    <location>
        <begin position="173"/>
        <end position="328"/>
    </location>
</feature>
<feature type="domain" description="Plastocyanin-like 3">
    <location>
        <begin position="444"/>
        <end position="586"/>
    </location>
</feature>
<feature type="binding site" evidence="1">
    <location>
        <position position="96"/>
    </location>
    <ligand>
        <name>Cu cation</name>
        <dbReference type="ChEBI" id="CHEBI:23378"/>
        <label>1</label>
    </ligand>
</feature>
<feature type="binding site" evidence="1">
    <location>
        <position position="98"/>
    </location>
    <ligand>
        <name>Cu cation</name>
        <dbReference type="ChEBI" id="CHEBI:23378"/>
        <label>2</label>
    </ligand>
</feature>
<feature type="binding site" evidence="1">
    <location>
        <position position="141"/>
    </location>
    <ligand>
        <name>Cu cation</name>
        <dbReference type="ChEBI" id="CHEBI:23378"/>
        <label>2</label>
    </ligand>
</feature>
<feature type="binding site" evidence="1">
    <location>
        <position position="143"/>
    </location>
    <ligand>
        <name>Cu cation</name>
        <dbReference type="ChEBI" id="CHEBI:23378"/>
        <label>3</label>
    </ligand>
</feature>
<feature type="binding site" evidence="2">
    <location>
        <position position="503"/>
    </location>
    <ligand>
        <name>Cu cation</name>
        <dbReference type="ChEBI" id="CHEBI:23378"/>
        <label>4</label>
    </ligand>
</feature>
<feature type="binding site" evidence="1">
    <location>
        <position position="506"/>
    </location>
    <ligand>
        <name>Cu cation</name>
        <dbReference type="ChEBI" id="CHEBI:23378"/>
        <label>1</label>
    </ligand>
</feature>
<feature type="binding site" evidence="1">
    <location>
        <position position="508"/>
    </location>
    <ligand>
        <name>Cu cation</name>
        <dbReference type="ChEBI" id="CHEBI:23378"/>
        <label>3</label>
    </ligand>
</feature>
<feature type="binding site" evidence="1">
    <location>
        <position position="565"/>
    </location>
    <ligand>
        <name>Cu cation</name>
        <dbReference type="ChEBI" id="CHEBI:23378"/>
        <label>3</label>
    </ligand>
</feature>
<feature type="binding site" evidence="2">
    <location>
        <position position="566"/>
    </location>
    <ligand>
        <name>Cu cation</name>
        <dbReference type="ChEBI" id="CHEBI:23378"/>
        <label>4</label>
    </ligand>
</feature>
<feature type="binding site" evidence="1">
    <location>
        <position position="567"/>
    </location>
    <ligand>
        <name>Cu cation</name>
        <dbReference type="ChEBI" id="CHEBI:23378"/>
        <label>2</label>
    </ligand>
</feature>
<feature type="binding site" evidence="2">
    <location>
        <position position="571"/>
    </location>
    <ligand>
        <name>Cu cation</name>
        <dbReference type="ChEBI" id="CHEBI:23378"/>
        <label>4</label>
    </ligand>
</feature>
<feature type="binding site" evidence="2">
    <location>
        <position position="576"/>
    </location>
    <ligand>
        <name>Cu cation</name>
        <dbReference type="ChEBI" id="CHEBI:23378"/>
        <label>4</label>
    </ligand>
</feature>
<feature type="glycosylation site" description="N-linked (GlcNAc...) asparagine" evidence="2">
    <location>
        <position position="51"/>
    </location>
</feature>
<feature type="glycosylation site" description="N-linked (GlcNAc...) asparagine" evidence="2">
    <location>
        <position position="92"/>
    </location>
</feature>
<feature type="glycosylation site" description="N-linked (GlcNAc...) asparagine" evidence="2">
    <location>
        <position position="124"/>
    </location>
</feature>
<feature type="glycosylation site" description="N-linked (GlcNAc...) asparagine" evidence="2">
    <location>
        <position position="193"/>
    </location>
</feature>
<feature type="glycosylation site" description="N-linked (GlcNAc...) asparagine" evidence="2">
    <location>
        <position position="217"/>
    </location>
</feature>
<feature type="glycosylation site" description="N-linked (GlcNAc...) asparagine" evidence="2">
    <location>
        <position position="331"/>
    </location>
</feature>
<feature type="glycosylation site" description="N-linked (GlcNAc...) asparagine" evidence="2">
    <location>
        <position position="355"/>
    </location>
</feature>
<feature type="glycosylation site" description="N-linked (GlcNAc...) asparagine" evidence="2">
    <location>
        <position position="412"/>
    </location>
</feature>
<feature type="glycosylation site" description="N-linked (GlcNAc...) asparagine" evidence="2">
    <location>
        <position position="454"/>
    </location>
</feature>
<feature type="sequence conflict" description="In Ref. 5; AK110474." evidence="3" ref="5">
    <original>T</original>
    <variation>A</variation>
    <location>
        <position position="273"/>
    </location>
</feature>
<feature type="sequence conflict" description="In Ref. 5; AK110474." evidence="3" ref="5">
    <original>D</original>
    <variation>N</variation>
    <location>
        <position position="311"/>
    </location>
</feature>
<evidence type="ECO:0000250" key="1"/>
<evidence type="ECO:0000255" key="2"/>
<evidence type="ECO:0000305" key="3"/>
<protein>
    <recommendedName>
        <fullName>Laccase-15</fullName>
        <ecNumber>1.10.3.2</ecNumber>
    </recommendedName>
    <alternativeName>
        <fullName>Benzenediol:oxygen oxidoreductase 15</fullName>
    </alternativeName>
    <alternativeName>
        <fullName>Diphenol oxidase 15</fullName>
    </alternativeName>
    <alternativeName>
        <fullName>Urishiol oxidase 15</fullName>
    </alternativeName>
</protein>
<sequence>MKRCQSSRPTAAVAAVVAAVSMIIVLVSGTAIPSAAAAAAVEHTFVVSQVNMTHLCKEMAFTVVNGQLPGPTIEVTEGDSVTVHVVNKSPYNLTIHWHGVYQLLNCWNDGVPMITQRPIQPNHNFTYRFNVAGQEGTLWWHAHDAFLRGTVHGALIIRPRHGAASYPFPRPHREVPIIIGEWWEKDLPQVDRNMTNGYFDDYSSGSTINGKLGDLFNCSGVLEDGYVLDVEPGKTYLLRIINAALFSEYFLKIAGHRFTVVASDANYLTPYSTDVVVIAPGETLDAIVVADAPPSGRYYIAAQPIQAPPPDTQTPEYATRGTLQYSSNSRNSSAAAMPEMPHQHDTMRSFYFRGNLTAGARLHRHGRRRVPARADESLFVTLGLGSVCRHGGASCKRGGNLKESIVVANVNNVSFHIPAAAATPILEAHYYHRLHAGAGEEEEELAERPPRAYNYTDQALTPFGPEEMRLEATSRAVVTRRFRHGATVDVVFQSTAMLQGDSNPMHLHGHDVFLLAQGIGIYDAARDEGKFNLVNPPRKNTVLVPNLGWAAVRFVADNPGAWLMHCHFEFHLSMGMAAVFIVEDGPTVDTSLPPPPEDF</sequence>
<accession>Q339K6</accession>
<accession>A0A0P0XTP0</accession>
<accession>Q94HD6</accession>
<comment type="function">
    <text evidence="1">Lignin degradation and detoxification of lignin-derived products.</text>
</comment>
<comment type="catalytic activity">
    <reaction>
        <text>4 hydroquinone + O2 = 4 benzosemiquinone + 2 H2O</text>
        <dbReference type="Rhea" id="RHEA:11276"/>
        <dbReference type="ChEBI" id="CHEBI:15377"/>
        <dbReference type="ChEBI" id="CHEBI:15379"/>
        <dbReference type="ChEBI" id="CHEBI:17594"/>
        <dbReference type="ChEBI" id="CHEBI:17977"/>
        <dbReference type="EC" id="1.10.3.2"/>
    </reaction>
</comment>
<comment type="cofactor">
    <cofactor evidence="1">
        <name>Cu cation</name>
        <dbReference type="ChEBI" id="CHEBI:23378"/>
    </cofactor>
    <text evidence="1">Binds 4 Cu cations per monomer.</text>
</comment>
<comment type="subcellular location">
    <subcellularLocation>
        <location evidence="3">Secreted</location>
        <location evidence="3">Extracellular space</location>
        <location evidence="3">Apoplast</location>
    </subcellularLocation>
</comment>
<comment type="similarity">
    <text evidence="3">Belongs to the multicopper oxidase family.</text>
</comment>
<comment type="sequence caution" evidence="3">
    <conflict type="erroneous gene model prediction">
        <sequence resource="EMBL-CDS" id="AAK92654"/>
    </conflict>
</comment>
<proteinExistence type="evidence at transcript level"/>
<reference key="1">
    <citation type="journal article" date="2003" name="Science">
        <title>In-depth view of structure, activity, and evolution of rice chromosome 10.</title>
        <authorList>
            <person name="Yu Y."/>
            <person name="Rambo T."/>
            <person name="Currie J."/>
            <person name="Saski C."/>
            <person name="Kim H.-R."/>
            <person name="Collura K."/>
            <person name="Thompson S."/>
            <person name="Simmons J."/>
            <person name="Yang T.-J."/>
            <person name="Nah G."/>
            <person name="Patel A.J."/>
            <person name="Thurmond S."/>
            <person name="Henry D."/>
            <person name="Oates R."/>
            <person name="Palmer M."/>
            <person name="Pries G."/>
            <person name="Gibson J."/>
            <person name="Anderson H."/>
            <person name="Paradkar M."/>
            <person name="Crane L."/>
            <person name="Dale J."/>
            <person name="Carver M.B."/>
            <person name="Wood T."/>
            <person name="Frisch D."/>
            <person name="Engler F."/>
            <person name="Soderlund C."/>
            <person name="Palmer L.E."/>
            <person name="Teytelman L."/>
            <person name="Nascimento L."/>
            <person name="De la Bastide M."/>
            <person name="Spiegel L."/>
            <person name="Ware D."/>
            <person name="O'Shaughnessy A."/>
            <person name="Dike S."/>
            <person name="Dedhia N."/>
            <person name="Preston R."/>
            <person name="Huang E."/>
            <person name="Ferraro K."/>
            <person name="Kuit K."/>
            <person name="Miller B."/>
            <person name="Zutavern T."/>
            <person name="Katzenberger F."/>
            <person name="Muller S."/>
            <person name="Balija V."/>
            <person name="Martienssen R.A."/>
            <person name="Stein L."/>
            <person name="Minx P."/>
            <person name="Johnson D."/>
            <person name="Cordum H."/>
            <person name="Mardis E."/>
            <person name="Cheng Z."/>
            <person name="Jiang J."/>
            <person name="Wilson R."/>
            <person name="McCombie W.R."/>
            <person name="Wing R.A."/>
            <person name="Yuan Q."/>
            <person name="Ouyang S."/>
            <person name="Liu J."/>
            <person name="Jones K.M."/>
            <person name="Gansberger K."/>
            <person name="Moffat K."/>
            <person name="Hill J."/>
            <person name="Tsitrin T."/>
            <person name="Overton L."/>
            <person name="Bera J."/>
            <person name="Kim M."/>
            <person name="Jin S."/>
            <person name="Tallon L."/>
            <person name="Ciecko A."/>
            <person name="Pai G."/>
            <person name="Van Aken S."/>
            <person name="Utterback T."/>
            <person name="Reidmuller S."/>
            <person name="Bormann J."/>
            <person name="Feldblyum T."/>
            <person name="Hsiao J."/>
            <person name="Zismann V."/>
            <person name="Blunt S."/>
            <person name="de Vazeille A.R."/>
            <person name="Shaffer T."/>
            <person name="Koo H."/>
            <person name="Suh B."/>
            <person name="Yang Q."/>
            <person name="Haas B."/>
            <person name="Peterson J."/>
            <person name="Pertea M."/>
            <person name="Volfovsky N."/>
            <person name="Wortman J."/>
            <person name="White O."/>
            <person name="Salzberg S.L."/>
            <person name="Fraser C.M."/>
            <person name="Buell C.R."/>
            <person name="Messing J."/>
            <person name="Song R."/>
            <person name="Fuks G."/>
            <person name="Llaca V."/>
            <person name="Kovchak S."/>
            <person name="Young S."/>
            <person name="Bowers J.E."/>
            <person name="Paterson A.H."/>
            <person name="Johns M.A."/>
            <person name="Mao L."/>
            <person name="Pan H."/>
            <person name="Dean R.A."/>
        </authorList>
    </citation>
    <scope>NUCLEOTIDE SEQUENCE [LARGE SCALE GENOMIC DNA]</scope>
    <source>
        <strain>cv. Nipponbare</strain>
    </source>
</reference>
<reference key="2">
    <citation type="journal article" date="2005" name="Nature">
        <title>The map-based sequence of the rice genome.</title>
        <authorList>
            <consortium name="International rice genome sequencing project (IRGSP)"/>
        </authorList>
    </citation>
    <scope>NUCLEOTIDE SEQUENCE [LARGE SCALE GENOMIC DNA]</scope>
    <source>
        <strain>cv. Nipponbare</strain>
    </source>
</reference>
<reference key="3">
    <citation type="journal article" date="2008" name="Nucleic Acids Res.">
        <title>The rice annotation project database (RAP-DB): 2008 update.</title>
        <authorList>
            <consortium name="The rice annotation project (RAP)"/>
        </authorList>
    </citation>
    <scope>GENOME REANNOTATION</scope>
    <source>
        <strain>cv. Nipponbare</strain>
    </source>
</reference>
<reference key="4">
    <citation type="journal article" date="2013" name="Rice">
        <title>Improvement of the Oryza sativa Nipponbare reference genome using next generation sequence and optical map data.</title>
        <authorList>
            <person name="Kawahara Y."/>
            <person name="de la Bastide M."/>
            <person name="Hamilton J.P."/>
            <person name="Kanamori H."/>
            <person name="McCombie W.R."/>
            <person name="Ouyang S."/>
            <person name="Schwartz D.C."/>
            <person name="Tanaka T."/>
            <person name="Wu J."/>
            <person name="Zhou S."/>
            <person name="Childs K.L."/>
            <person name="Davidson R.M."/>
            <person name="Lin H."/>
            <person name="Quesada-Ocampo L."/>
            <person name="Vaillancourt B."/>
            <person name="Sakai H."/>
            <person name="Lee S.S."/>
            <person name="Kim J."/>
            <person name="Numa H."/>
            <person name="Itoh T."/>
            <person name="Buell C.R."/>
            <person name="Matsumoto T."/>
        </authorList>
    </citation>
    <scope>GENOME REANNOTATION</scope>
    <source>
        <strain>cv. Nipponbare</strain>
    </source>
</reference>
<reference key="5">
    <citation type="journal article" date="2003" name="Science">
        <title>Collection, mapping, and annotation of over 28,000 cDNA clones from japonica rice.</title>
        <authorList>
            <consortium name="The rice full-length cDNA consortium"/>
        </authorList>
    </citation>
    <scope>NUCLEOTIDE SEQUENCE [LARGE SCALE MRNA]</scope>
    <source>
        <strain>cv. Nipponbare</strain>
    </source>
</reference>
<organism>
    <name type="scientific">Oryza sativa subsp. japonica</name>
    <name type="common">Rice</name>
    <dbReference type="NCBI Taxonomy" id="39947"/>
    <lineage>
        <taxon>Eukaryota</taxon>
        <taxon>Viridiplantae</taxon>
        <taxon>Streptophyta</taxon>
        <taxon>Embryophyta</taxon>
        <taxon>Tracheophyta</taxon>
        <taxon>Spermatophyta</taxon>
        <taxon>Magnoliopsida</taxon>
        <taxon>Liliopsida</taxon>
        <taxon>Poales</taxon>
        <taxon>Poaceae</taxon>
        <taxon>BOP clade</taxon>
        <taxon>Oryzoideae</taxon>
        <taxon>Oryzeae</taxon>
        <taxon>Oryzinae</taxon>
        <taxon>Oryza</taxon>
        <taxon>Oryza sativa</taxon>
    </lineage>
</organism>